<dbReference type="EMBL" id="BA000055">
    <property type="protein sequence ID" value="BAE64917.1"/>
    <property type="molecule type" value="Genomic_DNA"/>
</dbReference>
<dbReference type="EnsemblFungi" id="BAE64917">
    <property type="protein sequence ID" value="BAE64917"/>
    <property type="gene ID" value="AO090011000413"/>
</dbReference>
<dbReference type="HOGENOM" id="CLU_008455_1_1_1"/>
<dbReference type="Proteomes" id="UP000006564">
    <property type="component" value="Chromosome 7"/>
</dbReference>
<dbReference type="GO" id="GO:0005886">
    <property type="term" value="C:plasma membrane"/>
    <property type="evidence" value="ECO:0007669"/>
    <property type="project" value="UniProtKB-SubCell"/>
</dbReference>
<dbReference type="GO" id="GO:0022857">
    <property type="term" value="F:transmembrane transporter activity"/>
    <property type="evidence" value="ECO:0007669"/>
    <property type="project" value="InterPro"/>
</dbReference>
<dbReference type="CDD" id="cd17323">
    <property type="entry name" value="MFS_Tpo1_MDR_like"/>
    <property type="match status" value="1"/>
</dbReference>
<dbReference type="FunFam" id="1.20.1250.20:FF:000011">
    <property type="entry name" value="MFS multidrug transporter, putative"/>
    <property type="match status" value="1"/>
</dbReference>
<dbReference type="Gene3D" id="1.20.1250.20">
    <property type="entry name" value="MFS general substrate transporter like domains"/>
    <property type="match status" value="1"/>
</dbReference>
<dbReference type="InterPro" id="IPR011701">
    <property type="entry name" value="MFS"/>
</dbReference>
<dbReference type="InterPro" id="IPR020846">
    <property type="entry name" value="MFS_dom"/>
</dbReference>
<dbReference type="InterPro" id="IPR036259">
    <property type="entry name" value="MFS_trans_sf"/>
</dbReference>
<dbReference type="PANTHER" id="PTHR23502">
    <property type="entry name" value="MAJOR FACILITATOR SUPERFAMILY"/>
    <property type="match status" value="1"/>
</dbReference>
<dbReference type="PANTHER" id="PTHR23502:SF68">
    <property type="entry name" value="MULTIDRUG TRANSPORTER, PUTATIVE (AFU_ORTHOLOGUE AFUA_3G01120)-RELATED"/>
    <property type="match status" value="1"/>
</dbReference>
<dbReference type="Pfam" id="PF07690">
    <property type="entry name" value="MFS_1"/>
    <property type="match status" value="1"/>
</dbReference>
<dbReference type="SUPFAM" id="SSF103473">
    <property type="entry name" value="MFS general substrate transporter"/>
    <property type="match status" value="1"/>
</dbReference>
<dbReference type="PROSITE" id="PS50850">
    <property type="entry name" value="MFS"/>
    <property type="match status" value="1"/>
</dbReference>
<reference key="1">
    <citation type="journal article" date="2005" name="Nature">
        <title>Genome sequencing and analysis of Aspergillus oryzae.</title>
        <authorList>
            <person name="Machida M."/>
            <person name="Asai K."/>
            <person name="Sano M."/>
            <person name="Tanaka T."/>
            <person name="Kumagai T."/>
            <person name="Terai G."/>
            <person name="Kusumoto K."/>
            <person name="Arima T."/>
            <person name="Akita O."/>
            <person name="Kashiwagi Y."/>
            <person name="Abe K."/>
            <person name="Gomi K."/>
            <person name="Horiuchi H."/>
            <person name="Kitamoto K."/>
            <person name="Kobayashi T."/>
            <person name="Takeuchi M."/>
            <person name="Denning D.W."/>
            <person name="Galagan J.E."/>
            <person name="Nierman W.C."/>
            <person name="Yu J."/>
            <person name="Archer D.B."/>
            <person name="Bennett J.W."/>
            <person name="Bhatnagar D."/>
            <person name="Cleveland T.E."/>
            <person name="Fedorova N.D."/>
            <person name="Gotoh O."/>
            <person name="Horikawa H."/>
            <person name="Hosoyama A."/>
            <person name="Ichinomiya M."/>
            <person name="Igarashi R."/>
            <person name="Iwashita K."/>
            <person name="Juvvadi P.R."/>
            <person name="Kato M."/>
            <person name="Kato Y."/>
            <person name="Kin T."/>
            <person name="Kokubun A."/>
            <person name="Maeda H."/>
            <person name="Maeyama N."/>
            <person name="Maruyama J."/>
            <person name="Nagasaki H."/>
            <person name="Nakajima T."/>
            <person name="Oda K."/>
            <person name="Okada K."/>
            <person name="Paulsen I."/>
            <person name="Sakamoto K."/>
            <person name="Sawano T."/>
            <person name="Takahashi M."/>
            <person name="Takase K."/>
            <person name="Terabayashi Y."/>
            <person name="Wortman J.R."/>
            <person name="Yamada O."/>
            <person name="Yamagata Y."/>
            <person name="Anazawa H."/>
            <person name="Hata Y."/>
            <person name="Koide Y."/>
            <person name="Komori T."/>
            <person name="Koyama Y."/>
            <person name="Minetoki T."/>
            <person name="Suharnan S."/>
            <person name="Tanaka A."/>
            <person name="Isono K."/>
            <person name="Kuhara S."/>
            <person name="Ogasawara N."/>
            <person name="Kikuchi H."/>
        </authorList>
    </citation>
    <scope>NUCLEOTIDE SEQUENCE [LARGE SCALE GENOMIC DNA]</scope>
    <source>
        <strain>ATCC 42149 / RIB 40</strain>
    </source>
</reference>
<reference key="2">
    <citation type="journal article" date="2019" name="Biosci. Biotechnol. Biochem.">
        <title>Identification of a gene cluster for biosynthesis of the sesquiterpene antibiotic, heptelidic acid, in Aspergillus oryzae.</title>
        <authorList>
            <person name="Shinohara Y."/>
            <person name="Nishimura I."/>
            <person name="Koyama Y."/>
        </authorList>
    </citation>
    <scope>FUNCTION</scope>
    <scope>DISRUPTION PHENOTYPE</scope>
</reference>
<accession>Q2U0J8</accession>
<feature type="chain" id="PRO_0000450833" description="MFS-type transporter hepF">
    <location>
        <begin position="1"/>
        <end position="483"/>
    </location>
</feature>
<feature type="transmembrane region" description="Helical" evidence="1">
    <location>
        <begin position="89"/>
        <end position="109"/>
    </location>
</feature>
<feature type="transmembrane region" description="Helical" evidence="1">
    <location>
        <begin position="124"/>
        <end position="144"/>
    </location>
</feature>
<feature type="transmembrane region" description="Helical" evidence="1">
    <location>
        <begin position="147"/>
        <end position="167"/>
    </location>
</feature>
<feature type="transmembrane region" description="Helical" evidence="1">
    <location>
        <begin position="179"/>
        <end position="199"/>
    </location>
</feature>
<feature type="transmembrane region" description="Helical" evidence="1">
    <location>
        <begin position="206"/>
        <end position="226"/>
    </location>
</feature>
<feature type="transmembrane region" description="Helical" evidence="1">
    <location>
        <begin position="276"/>
        <end position="296"/>
    </location>
</feature>
<feature type="transmembrane region" description="Helical" evidence="1">
    <location>
        <begin position="311"/>
        <end position="331"/>
    </location>
</feature>
<feature type="transmembrane region" description="Helical" evidence="1">
    <location>
        <begin position="357"/>
        <end position="377"/>
    </location>
</feature>
<feature type="transmembrane region" description="Helical" evidence="1">
    <location>
        <begin position="385"/>
        <end position="405"/>
    </location>
</feature>
<feature type="transmembrane region" description="Helical" evidence="1">
    <location>
        <begin position="416"/>
        <end position="436"/>
    </location>
</feature>
<feature type="transmembrane region" description="Helical" evidence="1">
    <location>
        <begin position="448"/>
        <end position="468"/>
    </location>
</feature>
<feature type="region of interest" description="Disordered" evidence="2">
    <location>
        <begin position="1"/>
        <end position="31"/>
    </location>
</feature>
<feature type="compositionally biased region" description="Basic and acidic residues" evidence="2">
    <location>
        <begin position="7"/>
        <end position="17"/>
    </location>
</feature>
<keyword id="KW-1003">Cell membrane</keyword>
<keyword id="KW-0472">Membrane</keyword>
<keyword id="KW-1185">Reference proteome</keyword>
<keyword id="KW-0812">Transmembrane</keyword>
<keyword id="KW-1133">Transmembrane helix</keyword>
<keyword id="KW-0813">Transport</keyword>
<organism>
    <name type="scientific">Aspergillus oryzae (strain ATCC 42149 / RIB 40)</name>
    <name type="common">Yellow koji mold</name>
    <dbReference type="NCBI Taxonomy" id="510516"/>
    <lineage>
        <taxon>Eukaryota</taxon>
        <taxon>Fungi</taxon>
        <taxon>Dikarya</taxon>
        <taxon>Ascomycota</taxon>
        <taxon>Pezizomycotina</taxon>
        <taxon>Eurotiomycetes</taxon>
        <taxon>Eurotiomycetidae</taxon>
        <taxon>Eurotiales</taxon>
        <taxon>Aspergillaceae</taxon>
        <taxon>Aspergillus</taxon>
        <taxon>Aspergillus subgen. Circumdati</taxon>
    </lineage>
</organism>
<protein>
    <recommendedName>
        <fullName evidence="4">MFS-type transporter hepF</fullName>
    </recommendedName>
    <alternativeName>
        <fullName evidence="4">Heptelidic acid biosynthesis cluster protein F</fullName>
    </alternativeName>
</protein>
<sequence length="483" mass="53129">METPAGKADRPRDHDSEQSQDNVVSWEGEDDPTNPLNWSPLAKWVHVAIISIGTFTIAREKSPLASSIFAPGVVELAHEFHEENQLLTTIVVSIFVLGLAFGPLLAAPISEMYGRWICYTVFNILYTIFTVACGVSTNISMLIVFRFFAGVTGSAPLTIGGGTVADLFPMHQRGLALSFVTLGQAVAPAIGPVAGGFLTQNLGWRWVFWLLTIVNGTITICQILFTRETYAMTILNRRAKRLRKTTVHSSVTHRSVNFAIFFYSLVRPCKLLLLSPISLIVALCCAVIYGILYVLVTTFSPVFQDTYHFSIGISGLGYLGLGIGNLVGLWIFSMTSDRYMVAQANRFGSAKPEHRLPMMILSGPVIAAGLFWYGWSVQARIHWMMPIVGSGIVGLGNMFFFMPMVSYLVDSFPTYAASAIAANAVLRSIGGAVLPLAGQRMYDTLGFGWGNSILAFMALVFNPLLIAIYRYGEYIRTRWQVKL</sequence>
<gene>
    <name type="primary">hepF</name>
    <name type="ORF">AO090011000413</name>
</gene>
<evidence type="ECO:0000255" key="1"/>
<evidence type="ECO:0000256" key="2">
    <source>
        <dbReference type="SAM" id="MobiDB-lite"/>
    </source>
</evidence>
<evidence type="ECO:0000269" key="3">
    <source>
    </source>
</evidence>
<evidence type="ECO:0000303" key="4">
    <source>
    </source>
</evidence>
<evidence type="ECO:0000305" key="5"/>
<evidence type="ECO:0000305" key="6">
    <source>
    </source>
</evidence>
<comment type="function">
    <text evidence="3 6">MFS-type transporter; part of the gene cluster that mediates the biosynthesis of heptelidic acid (HA), a sesquiterpene lactone that acts as an inhibitor of glyceraldehyde-3-phosphatedehydrogenase (GAPDH) and a growth inhibitor of the salt-tolerant lactic acid bacteria in soy sauce brewing (PubMed:30466366). Might be required for efficient secretion of heptelidic acid (Probable).</text>
</comment>
<comment type="subcellular location">
    <subcellularLocation>
        <location evidence="5">Cell membrane</location>
        <topology evidence="1">Multi-pass membrane protein</topology>
    </subcellularLocation>
</comment>
<comment type="disruption phenotype">
    <text evidence="3">Does not affect the biosynthesis of heptelidic acid.</text>
</comment>
<comment type="similarity">
    <text evidence="5">Belongs to the major facilitator superfamily.</text>
</comment>
<name>HEPF_ASPOR</name>
<proteinExistence type="inferred from homology"/>